<dbReference type="EMBL" id="BA000031">
    <property type="protein sequence ID" value="BAC60432.1"/>
    <property type="molecule type" value="Genomic_DNA"/>
</dbReference>
<dbReference type="RefSeq" id="NP_798548.1">
    <property type="nucleotide sequence ID" value="NC_004603.1"/>
</dbReference>
<dbReference type="RefSeq" id="WP_005460092.1">
    <property type="nucleotide sequence ID" value="NC_004603.1"/>
</dbReference>
<dbReference type="GeneID" id="1189682"/>
<dbReference type="KEGG" id="vpa:VP2169"/>
<dbReference type="PATRIC" id="fig|223926.6.peg.2072"/>
<dbReference type="eggNOG" id="COG2983">
    <property type="taxonomic scope" value="Bacteria"/>
</dbReference>
<dbReference type="HOGENOM" id="CLU_109769_2_0_6"/>
<dbReference type="Proteomes" id="UP000002493">
    <property type="component" value="Chromosome 1"/>
</dbReference>
<dbReference type="HAMAP" id="MF_00676">
    <property type="entry name" value="UPF0260"/>
    <property type="match status" value="1"/>
</dbReference>
<dbReference type="InterPro" id="IPR005358">
    <property type="entry name" value="Puta_zinc/iron-chelating_dom"/>
</dbReference>
<dbReference type="InterPro" id="IPR008228">
    <property type="entry name" value="UCP006173"/>
</dbReference>
<dbReference type="NCBIfam" id="NF003501">
    <property type="entry name" value="PRK05170.1-5"/>
    <property type="match status" value="1"/>
</dbReference>
<dbReference type="NCBIfam" id="NF003503">
    <property type="entry name" value="PRK05170.2-1"/>
    <property type="match status" value="1"/>
</dbReference>
<dbReference type="NCBIfam" id="NF003507">
    <property type="entry name" value="PRK05170.2-5"/>
    <property type="match status" value="1"/>
</dbReference>
<dbReference type="PANTHER" id="PTHR37421">
    <property type="entry name" value="UPF0260 PROTEIN YCGN"/>
    <property type="match status" value="1"/>
</dbReference>
<dbReference type="PANTHER" id="PTHR37421:SF1">
    <property type="entry name" value="UPF0260 PROTEIN YCGN"/>
    <property type="match status" value="1"/>
</dbReference>
<dbReference type="Pfam" id="PF03692">
    <property type="entry name" value="CxxCxxCC"/>
    <property type="match status" value="1"/>
</dbReference>
<dbReference type="PIRSF" id="PIRSF006173">
    <property type="entry name" value="UCP006173"/>
    <property type="match status" value="1"/>
</dbReference>
<protein>
    <recommendedName>
        <fullName evidence="1">UPF0260 protein VP2169</fullName>
    </recommendedName>
</protein>
<reference key="1">
    <citation type="journal article" date="2003" name="Lancet">
        <title>Genome sequence of Vibrio parahaemolyticus: a pathogenic mechanism distinct from that of V. cholerae.</title>
        <authorList>
            <person name="Makino K."/>
            <person name="Oshima K."/>
            <person name="Kurokawa K."/>
            <person name="Yokoyama K."/>
            <person name="Uda T."/>
            <person name="Tagomori K."/>
            <person name="Iijima Y."/>
            <person name="Najima M."/>
            <person name="Nakano M."/>
            <person name="Yamashita A."/>
            <person name="Kubota Y."/>
            <person name="Kimura S."/>
            <person name="Yasunaga T."/>
            <person name="Honda T."/>
            <person name="Shinagawa H."/>
            <person name="Hattori M."/>
            <person name="Iida T."/>
        </authorList>
    </citation>
    <scope>NUCLEOTIDE SEQUENCE [LARGE SCALE GENOMIC DNA]</scope>
    <source>
        <strain>RIMD 2210633</strain>
    </source>
</reference>
<feature type="chain" id="PRO_0000214596" description="UPF0260 protein VP2169">
    <location>
        <begin position="1"/>
        <end position="146"/>
    </location>
</feature>
<comment type="similarity">
    <text evidence="1">Belongs to the UPF0260 family.</text>
</comment>
<organism>
    <name type="scientific">Vibrio parahaemolyticus serotype O3:K6 (strain RIMD 2210633)</name>
    <dbReference type="NCBI Taxonomy" id="223926"/>
    <lineage>
        <taxon>Bacteria</taxon>
        <taxon>Pseudomonadati</taxon>
        <taxon>Pseudomonadota</taxon>
        <taxon>Gammaproteobacteria</taxon>
        <taxon>Vibrionales</taxon>
        <taxon>Vibrionaceae</taxon>
        <taxon>Vibrio</taxon>
    </lineage>
</organism>
<proteinExistence type="inferred from homology"/>
<accession>Q87MR2</accession>
<evidence type="ECO:0000255" key="1">
    <source>
        <dbReference type="HAMAP-Rule" id="MF_00676"/>
    </source>
</evidence>
<gene>
    <name type="ordered locus">VP2169</name>
</gene>
<name>Y2169_VIBPA</name>
<sequence>MSTPFWQSKSLEHMSEEEWESLCDGCGKCCLHKLMDEDTDEIYYTNVACSWLNSKTCSCKDYPNRFTSGEECTKLTREDIDDFTWLPHTCAYRLLAENQPLPEWHPLITGSKSAMHAAGESVRNKVVYEIDVVDWEDHILNHPNRP</sequence>